<proteinExistence type="evidence at protein level"/>
<accession>Q8NAA4</accession>
<accession>A5PL30</accession>
<accession>B2RPK5</accession>
<accession>Q658V4</accession>
<accession>Q6PID3</accession>
<accession>Q8NBG0</accession>
<name>A16L2_HUMAN</name>
<reference key="1">
    <citation type="journal article" date="2004" name="Nat. Genet.">
        <title>Complete sequencing and characterization of 21,243 full-length human cDNAs.</title>
        <authorList>
            <person name="Ota T."/>
            <person name="Suzuki Y."/>
            <person name="Nishikawa T."/>
            <person name="Otsuki T."/>
            <person name="Sugiyama T."/>
            <person name="Irie R."/>
            <person name="Wakamatsu A."/>
            <person name="Hayashi K."/>
            <person name="Sato H."/>
            <person name="Nagai K."/>
            <person name="Kimura K."/>
            <person name="Makita H."/>
            <person name="Sekine M."/>
            <person name="Obayashi M."/>
            <person name="Nishi T."/>
            <person name="Shibahara T."/>
            <person name="Tanaka T."/>
            <person name="Ishii S."/>
            <person name="Yamamoto J."/>
            <person name="Saito K."/>
            <person name="Kawai Y."/>
            <person name="Isono Y."/>
            <person name="Nakamura Y."/>
            <person name="Nagahari K."/>
            <person name="Murakami K."/>
            <person name="Yasuda T."/>
            <person name="Iwayanagi T."/>
            <person name="Wagatsuma M."/>
            <person name="Shiratori A."/>
            <person name="Sudo H."/>
            <person name="Hosoiri T."/>
            <person name="Kaku Y."/>
            <person name="Kodaira H."/>
            <person name="Kondo H."/>
            <person name="Sugawara M."/>
            <person name="Takahashi M."/>
            <person name="Kanda K."/>
            <person name="Yokoi T."/>
            <person name="Furuya T."/>
            <person name="Kikkawa E."/>
            <person name="Omura Y."/>
            <person name="Abe K."/>
            <person name="Kamihara K."/>
            <person name="Katsuta N."/>
            <person name="Sato K."/>
            <person name="Tanikawa M."/>
            <person name="Yamazaki M."/>
            <person name="Ninomiya K."/>
            <person name="Ishibashi T."/>
            <person name="Yamashita H."/>
            <person name="Murakawa K."/>
            <person name="Fujimori K."/>
            <person name="Tanai H."/>
            <person name="Kimata M."/>
            <person name="Watanabe M."/>
            <person name="Hiraoka S."/>
            <person name="Chiba Y."/>
            <person name="Ishida S."/>
            <person name="Ono Y."/>
            <person name="Takiguchi S."/>
            <person name="Watanabe S."/>
            <person name="Yosida M."/>
            <person name="Hotuta T."/>
            <person name="Kusano J."/>
            <person name="Kanehori K."/>
            <person name="Takahashi-Fujii A."/>
            <person name="Hara H."/>
            <person name="Tanase T.-O."/>
            <person name="Nomura Y."/>
            <person name="Togiya S."/>
            <person name="Komai F."/>
            <person name="Hara R."/>
            <person name="Takeuchi K."/>
            <person name="Arita M."/>
            <person name="Imose N."/>
            <person name="Musashino K."/>
            <person name="Yuuki H."/>
            <person name="Oshima A."/>
            <person name="Sasaki N."/>
            <person name="Aotsuka S."/>
            <person name="Yoshikawa Y."/>
            <person name="Matsunawa H."/>
            <person name="Ichihara T."/>
            <person name="Shiohata N."/>
            <person name="Sano S."/>
            <person name="Moriya S."/>
            <person name="Momiyama H."/>
            <person name="Satoh N."/>
            <person name="Takami S."/>
            <person name="Terashima Y."/>
            <person name="Suzuki O."/>
            <person name="Nakagawa S."/>
            <person name="Senoh A."/>
            <person name="Mizoguchi H."/>
            <person name="Goto Y."/>
            <person name="Shimizu F."/>
            <person name="Wakebe H."/>
            <person name="Hishigaki H."/>
            <person name="Watanabe T."/>
            <person name="Sugiyama A."/>
            <person name="Takemoto M."/>
            <person name="Kawakami B."/>
            <person name="Yamazaki M."/>
            <person name="Watanabe K."/>
            <person name="Kumagai A."/>
            <person name="Itakura S."/>
            <person name="Fukuzumi Y."/>
            <person name="Fujimori Y."/>
            <person name="Komiyama M."/>
            <person name="Tashiro H."/>
            <person name="Tanigami A."/>
            <person name="Fujiwara T."/>
            <person name="Ono T."/>
            <person name="Yamada K."/>
            <person name="Fujii Y."/>
            <person name="Ozaki K."/>
            <person name="Hirao M."/>
            <person name="Ohmori Y."/>
            <person name="Kawabata A."/>
            <person name="Hikiji T."/>
            <person name="Kobatake N."/>
            <person name="Inagaki H."/>
            <person name="Ikema Y."/>
            <person name="Okamoto S."/>
            <person name="Okitani R."/>
            <person name="Kawakami T."/>
            <person name="Noguchi S."/>
            <person name="Itoh T."/>
            <person name="Shigeta K."/>
            <person name="Senba T."/>
            <person name="Matsumura K."/>
            <person name="Nakajima Y."/>
            <person name="Mizuno T."/>
            <person name="Morinaga M."/>
            <person name="Sasaki M."/>
            <person name="Togashi T."/>
            <person name="Oyama M."/>
            <person name="Hata H."/>
            <person name="Watanabe M."/>
            <person name="Komatsu T."/>
            <person name="Mizushima-Sugano J."/>
            <person name="Satoh T."/>
            <person name="Shirai Y."/>
            <person name="Takahashi Y."/>
            <person name="Nakagawa K."/>
            <person name="Okumura K."/>
            <person name="Nagase T."/>
            <person name="Nomura N."/>
            <person name="Kikuchi H."/>
            <person name="Masuho Y."/>
            <person name="Yamashita R."/>
            <person name="Nakai K."/>
            <person name="Yada T."/>
            <person name="Nakamura Y."/>
            <person name="Ohara O."/>
            <person name="Isogai T."/>
            <person name="Sugano S."/>
        </authorList>
    </citation>
    <scope>NUCLEOTIDE SEQUENCE [LARGE SCALE MRNA] (ISOFORMS 1 AND 2)</scope>
    <source>
        <tissue>Astrocyte</tissue>
        <tissue>Spleen</tissue>
    </source>
</reference>
<reference key="2">
    <citation type="submission" date="2005-07" db="EMBL/GenBank/DDBJ databases">
        <authorList>
            <person name="Mural R.J."/>
            <person name="Istrail S."/>
            <person name="Sutton G.G."/>
            <person name="Florea L."/>
            <person name="Halpern A.L."/>
            <person name="Mobarry C.M."/>
            <person name="Lippert R."/>
            <person name="Walenz B."/>
            <person name="Shatkay H."/>
            <person name="Dew I."/>
            <person name="Miller J.R."/>
            <person name="Flanigan M.J."/>
            <person name="Edwards N.J."/>
            <person name="Bolanos R."/>
            <person name="Fasulo D."/>
            <person name="Halldorsson B.V."/>
            <person name="Hannenhalli S."/>
            <person name="Turner R."/>
            <person name="Yooseph S."/>
            <person name="Lu F."/>
            <person name="Nusskern D.R."/>
            <person name="Shue B.C."/>
            <person name="Zheng X.H."/>
            <person name="Zhong F."/>
            <person name="Delcher A.L."/>
            <person name="Huson D.H."/>
            <person name="Kravitz S.A."/>
            <person name="Mouchard L."/>
            <person name="Reinert K."/>
            <person name="Remington K.A."/>
            <person name="Clark A.G."/>
            <person name="Waterman M.S."/>
            <person name="Eichler E.E."/>
            <person name="Adams M.D."/>
            <person name="Hunkapiller M.W."/>
            <person name="Myers E.W."/>
            <person name="Venter J.C."/>
        </authorList>
    </citation>
    <scope>NUCLEOTIDE SEQUENCE [LARGE SCALE GENOMIC DNA]</scope>
</reference>
<reference key="3">
    <citation type="journal article" date="2004" name="Genome Res.">
        <title>The status, quality, and expansion of the NIH full-length cDNA project: the Mammalian Gene Collection (MGC).</title>
        <authorList>
            <consortium name="The MGC Project Team"/>
        </authorList>
    </citation>
    <scope>NUCLEOTIDE SEQUENCE [LARGE SCALE MRNA] (ISOFORMS 1 AND 3)</scope>
    <source>
        <tissue>Eye</tissue>
    </source>
</reference>
<reference key="4">
    <citation type="journal article" date="2007" name="BMC Genomics">
        <title>The full-ORF clone resource of the German cDNA consortium.</title>
        <authorList>
            <person name="Bechtel S."/>
            <person name="Rosenfelder H."/>
            <person name="Duda A."/>
            <person name="Schmidt C.P."/>
            <person name="Ernst U."/>
            <person name="Wellenreuther R."/>
            <person name="Mehrle A."/>
            <person name="Schuster C."/>
            <person name="Bahr A."/>
            <person name="Bloecker H."/>
            <person name="Heubner D."/>
            <person name="Hoerlein A."/>
            <person name="Michel G."/>
            <person name="Wedler H."/>
            <person name="Koehrer K."/>
            <person name="Ottenwaelder B."/>
            <person name="Poustka A."/>
            <person name="Wiemann S."/>
            <person name="Schupp I."/>
        </authorList>
    </citation>
    <scope>NUCLEOTIDE SEQUENCE [LARGE SCALE MRNA] OF 297-619</scope>
    <source>
        <tissue>Stomach</tissue>
    </source>
</reference>
<reference key="5">
    <citation type="journal article" date="2014" name="J. Proteomics">
        <title>An enzyme assisted RP-RPLC approach for in-depth analysis of human liver phosphoproteome.</title>
        <authorList>
            <person name="Bian Y."/>
            <person name="Song C."/>
            <person name="Cheng K."/>
            <person name="Dong M."/>
            <person name="Wang F."/>
            <person name="Huang J."/>
            <person name="Sun D."/>
            <person name="Wang L."/>
            <person name="Ye M."/>
            <person name="Zou H."/>
        </authorList>
    </citation>
    <scope>IDENTIFICATION BY MASS SPECTROMETRY [LARGE SCALE ANALYSIS]</scope>
    <source>
        <tissue>Liver</tissue>
    </source>
</reference>
<evidence type="ECO:0000250" key="1">
    <source>
        <dbReference type="UniProtKB" id="Q6KAU8"/>
    </source>
</evidence>
<evidence type="ECO:0000255" key="2"/>
<evidence type="ECO:0000256" key="3">
    <source>
        <dbReference type="SAM" id="MobiDB-lite"/>
    </source>
</evidence>
<evidence type="ECO:0000303" key="4">
    <source>
    </source>
</evidence>
<evidence type="ECO:0000303" key="5">
    <source>
    </source>
</evidence>
<evidence type="ECO:0000305" key="6"/>
<comment type="function">
    <text evidence="1">May play a role in regulating epithelial homeostasis in an ATG16L1-dependent manner.</text>
</comment>
<comment type="subunit">
    <text evidence="1">Homooligomer. Heterooligomer with ATG16L1. Interacts with ATG5. Self-oligomerizes to form a 800-kDa complex composed of ATG12-ATG5 and ATG16L2. Interacts with RAB33B.</text>
</comment>
<comment type="subcellular location">
    <subcellularLocation>
        <location evidence="1">Cytoplasm</location>
        <location evidence="1">Cytosol</location>
    </subcellularLocation>
    <text evidence="1">Also localizes to discrete punctae along the ciliary axoneme.</text>
</comment>
<comment type="alternative products">
    <event type="alternative splicing"/>
    <isoform>
        <id>Q8NAA4-1</id>
        <name>1</name>
        <sequence type="displayed"/>
    </isoform>
    <isoform>
        <id>Q8NAA4-2</id>
        <name>2</name>
        <sequence type="described" ref="VSP_033904"/>
    </isoform>
    <isoform>
        <id>Q8NAA4-3</id>
        <name>3</name>
        <sequence type="described" ref="VSP_033905"/>
    </isoform>
</comment>
<comment type="miscellaneous">
    <text evidence="1">Although ATG16L2 is structurally similar to ATG16L1 and is likewise able to form a complex with the autophagy proteins ATG5 and ATG12, overexpression and knockdown studies in mouse suggest that ATG16L2 is not essential for canonical autophagy.</text>
</comment>
<comment type="similarity">
    <text evidence="6">Belongs to the WD repeat ATG16 family.</text>
</comment>
<protein>
    <recommendedName>
        <fullName evidence="6">Protein Atg16l2</fullName>
    </recommendedName>
    <alternativeName>
        <fullName>APG16-like 2</fullName>
    </alternativeName>
    <alternativeName>
        <fullName>Autophagy-related protein 16-2</fullName>
    </alternativeName>
    <alternativeName>
        <fullName>WD repeat-containing protein 80</fullName>
    </alternativeName>
</protein>
<gene>
    <name type="primary">ATG16L2</name>
    <name type="synonym">WDR80</name>
</gene>
<feature type="chain" id="PRO_0000337110" description="Protein Atg16l2">
    <location>
        <begin position="1"/>
        <end position="619"/>
    </location>
</feature>
<feature type="repeat" description="WD 1" evidence="2">
    <location>
        <begin position="334"/>
        <end position="373"/>
    </location>
</feature>
<feature type="repeat" description="WD 2" evidence="2">
    <location>
        <begin position="378"/>
        <end position="417"/>
    </location>
</feature>
<feature type="repeat" description="WD 3" evidence="2">
    <location>
        <begin position="420"/>
        <end position="454"/>
    </location>
</feature>
<feature type="repeat" description="WD 4" evidence="2">
    <location>
        <begin position="455"/>
        <end position="498"/>
    </location>
</feature>
<feature type="repeat" description="WD 5" evidence="2">
    <location>
        <begin position="500"/>
        <end position="539"/>
    </location>
</feature>
<feature type="repeat" description="WD 6" evidence="2">
    <location>
        <begin position="546"/>
        <end position="585"/>
    </location>
</feature>
<feature type="repeat" description="WD 7" evidence="2">
    <location>
        <begin position="589"/>
        <end position="619"/>
    </location>
</feature>
<feature type="region of interest" description="Disordered" evidence="3">
    <location>
        <begin position="57"/>
        <end position="78"/>
    </location>
</feature>
<feature type="coiled-coil region" evidence="2">
    <location>
        <begin position="116"/>
        <end position="227"/>
    </location>
</feature>
<feature type="compositionally biased region" description="Polar residues" evidence="3">
    <location>
        <begin position="60"/>
        <end position="70"/>
    </location>
</feature>
<feature type="splice variant" id="VSP_033904" description="In isoform 2." evidence="4">
    <location>
        <begin position="1"/>
        <end position="106"/>
    </location>
</feature>
<feature type="splice variant" id="VSP_033905" description="In isoform 3." evidence="5">
    <location>
        <begin position="276"/>
        <end position="619"/>
    </location>
</feature>
<feature type="sequence variant" id="VAR_043605" description="In dbSNP:rs11235604.">
    <original>R</original>
    <variation>W</variation>
    <location>
        <position position="220"/>
    </location>
</feature>
<feature type="sequence conflict" description="In Ref. 1; BAC03485." evidence="6" ref="1">
    <original>E</original>
    <variation>G</variation>
    <location>
        <position position="124"/>
    </location>
</feature>
<feature type="sequence conflict" description="In Ref. 3; AAH36713." evidence="6" ref="3">
    <original>A</original>
    <variation>V</variation>
    <location>
        <position position="256"/>
    </location>
</feature>
<feature type="sequence conflict" description="In Ref. 1; BAC03485." evidence="6" ref="1">
    <original>R</original>
    <variation>G</variation>
    <location>
        <position position="343"/>
    </location>
</feature>
<feature type="sequence conflict" description="In Ref. 1; BAC04021." evidence="6" ref="1">
    <original>G</original>
    <variation>E</variation>
    <location>
        <position position="492"/>
    </location>
</feature>
<feature type="sequence conflict" description="In Ref. 4; CAH56355." evidence="6" ref="4">
    <original>L</original>
    <variation>R</variation>
    <location>
        <position position="508"/>
    </location>
</feature>
<sequence length="619" mass="68998">MAGPGVPGAPAARWKRHIVRQLRLRDRTQKALFLELVPAYNHLLEKAELLDKFSKKLQPEPNSVTPTTHQGPWEESELDSDQVPSLVALRVKWQEEEEGLRLVCGEMAYQVVEKGAALGTLESELQQRQSRLAALEARVAQLREARAQQAQQVEEWRAQNAVQRAAYEALRAHVGLREAALRRLQEEARDLLERLVQRKARAAAERNLRNERRERAKQARVSQELKKAAKRTVSISEGPDTLGDGMRERRETLALAPEPEPLEKEACEKWKRPFRSASATSLTLSHCVDVVKGLLDFKKRRGHSIGGAPEQRYQIIPVCVAARLPTRAQDVLDAHLSEVNAVRFGPNSSLLATGGADRLIHLWNVVGSRLEANQTLEGAGGSITSVDFDPSGYQVLAATYNQAAQLWKVGEAQSKETLSGHKDKVTAAKFKLTRHQAVTGSRDRTVKEWDLGRAYCSRTINVLSYCNDVVCGDHIIISGHNDQKIRFWDSRGPHCTQVIPVQGRVTSLSLSHDQLHLLSCSRDNTLKVIDLRVSNIRQVFRADGFKCGSDWTKAVFSPDRSYALAGSCDGALYIWDVDTGKLESRLQGPHCAAVNAVAWCYSGSHMVSVDQGRKVVLWQ</sequence>
<organism>
    <name type="scientific">Homo sapiens</name>
    <name type="common">Human</name>
    <dbReference type="NCBI Taxonomy" id="9606"/>
    <lineage>
        <taxon>Eukaryota</taxon>
        <taxon>Metazoa</taxon>
        <taxon>Chordata</taxon>
        <taxon>Craniata</taxon>
        <taxon>Vertebrata</taxon>
        <taxon>Euteleostomi</taxon>
        <taxon>Mammalia</taxon>
        <taxon>Eutheria</taxon>
        <taxon>Euarchontoglires</taxon>
        <taxon>Primates</taxon>
        <taxon>Haplorrhini</taxon>
        <taxon>Catarrhini</taxon>
        <taxon>Hominidae</taxon>
        <taxon>Homo</taxon>
    </lineage>
</organism>
<dbReference type="EMBL" id="AK093017">
    <property type="protein sequence ID" value="BAC04021.1"/>
    <property type="molecule type" value="mRNA"/>
</dbReference>
<dbReference type="EMBL" id="AK090597">
    <property type="protein sequence ID" value="BAC03485.1"/>
    <property type="molecule type" value="mRNA"/>
</dbReference>
<dbReference type="EMBL" id="CH471076">
    <property type="protein sequence ID" value="EAW74876.1"/>
    <property type="molecule type" value="Genomic_DNA"/>
</dbReference>
<dbReference type="EMBL" id="CH471076">
    <property type="protein sequence ID" value="EAW74874.1"/>
    <property type="molecule type" value="Genomic_DNA"/>
</dbReference>
<dbReference type="EMBL" id="BC036713">
    <property type="protein sequence ID" value="AAH36713.1"/>
    <property type="molecule type" value="mRNA"/>
</dbReference>
<dbReference type="EMBL" id="BC137489">
    <property type="protein sequence ID" value="AAI37490.1"/>
    <property type="molecule type" value="mRNA"/>
</dbReference>
<dbReference type="EMBL" id="BC137490">
    <property type="protein sequence ID" value="AAI37491.1"/>
    <property type="molecule type" value="mRNA"/>
</dbReference>
<dbReference type="EMBL" id="BC142718">
    <property type="protein sequence ID" value="AAI42719.1"/>
    <property type="molecule type" value="mRNA"/>
</dbReference>
<dbReference type="EMBL" id="BC146660">
    <property type="protein sequence ID" value="AAI46661.1"/>
    <property type="molecule type" value="mRNA"/>
</dbReference>
<dbReference type="EMBL" id="AL832974">
    <property type="protein sequence ID" value="CAH56355.1"/>
    <property type="molecule type" value="mRNA"/>
</dbReference>
<dbReference type="CCDS" id="CCDS31634.1">
    <molecule id="Q8NAA4-1"/>
</dbReference>
<dbReference type="RefSeq" id="NP_001305695.1">
    <molecule id="Q8NAA4-2"/>
    <property type="nucleotide sequence ID" value="NM_001318766.2"/>
</dbReference>
<dbReference type="RefSeq" id="NP_203746.1">
    <molecule id="Q8NAA4-1"/>
    <property type="nucleotide sequence ID" value="NM_033388.2"/>
</dbReference>
<dbReference type="RefSeq" id="XP_011543635.1">
    <molecule id="Q8NAA4-2"/>
    <property type="nucleotide sequence ID" value="XM_011545333.2"/>
</dbReference>
<dbReference type="RefSeq" id="XP_011543636.1">
    <molecule id="Q8NAA4-2"/>
    <property type="nucleotide sequence ID" value="XM_011545334.2"/>
</dbReference>
<dbReference type="RefSeq" id="XP_054226395.1">
    <molecule id="Q8NAA4-2"/>
    <property type="nucleotide sequence ID" value="XM_054370420.1"/>
</dbReference>
<dbReference type="RefSeq" id="XP_054226397.1">
    <molecule id="Q8NAA4-2"/>
    <property type="nucleotide sequence ID" value="XM_054370422.1"/>
</dbReference>
<dbReference type="SMR" id="Q8NAA4"/>
<dbReference type="BioGRID" id="124620">
    <property type="interactions" value="43"/>
</dbReference>
<dbReference type="ComplexPortal" id="CPX-354">
    <property type="entry name" value="ATG12-ATG5-ATG16L2 complex"/>
</dbReference>
<dbReference type="FunCoup" id="Q8NAA4">
    <property type="interactions" value="1071"/>
</dbReference>
<dbReference type="IntAct" id="Q8NAA4">
    <property type="interactions" value="6"/>
</dbReference>
<dbReference type="MINT" id="Q8NAA4"/>
<dbReference type="STRING" id="9606.ENSP00000326340"/>
<dbReference type="TCDB" id="9.A.15.2.1">
    <property type="family name" value="the autophagy-related phagophore-formation transporter (apt) family"/>
</dbReference>
<dbReference type="iPTMnet" id="Q8NAA4"/>
<dbReference type="PhosphoSitePlus" id="Q8NAA4"/>
<dbReference type="BioMuta" id="ATG16L2"/>
<dbReference type="DMDM" id="189027648"/>
<dbReference type="jPOST" id="Q8NAA4"/>
<dbReference type="MassIVE" id="Q8NAA4"/>
<dbReference type="PaxDb" id="9606-ENSP00000326340"/>
<dbReference type="PeptideAtlas" id="Q8NAA4"/>
<dbReference type="ProteomicsDB" id="72661">
    <molecule id="Q8NAA4-1"/>
</dbReference>
<dbReference type="ProteomicsDB" id="72662">
    <molecule id="Q8NAA4-2"/>
</dbReference>
<dbReference type="ProteomicsDB" id="72663">
    <molecule id="Q8NAA4-3"/>
</dbReference>
<dbReference type="Antibodypedia" id="30896">
    <property type="antibodies" value="186 antibodies from 26 providers"/>
</dbReference>
<dbReference type="DNASU" id="89849"/>
<dbReference type="Ensembl" id="ENST00000321297.10">
    <molecule id="Q8NAA4-1"/>
    <property type="protein sequence ID" value="ENSP00000326340.5"/>
    <property type="gene ID" value="ENSG00000168010.11"/>
</dbReference>
<dbReference type="GeneID" id="89849"/>
<dbReference type="KEGG" id="hsa:89849"/>
<dbReference type="MANE-Select" id="ENST00000321297.10">
    <property type="protein sequence ID" value="ENSP00000326340.5"/>
    <property type="RefSeq nucleotide sequence ID" value="NM_033388.2"/>
    <property type="RefSeq protein sequence ID" value="NP_203746.1"/>
</dbReference>
<dbReference type="UCSC" id="uc001otd.4">
    <molecule id="Q8NAA4-1"/>
    <property type="organism name" value="human"/>
</dbReference>
<dbReference type="AGR" id="HGNC:25464"/>
<dbReference type="CTD" id="89849"/>
<dbReference type="DisGeNET" id="89849"/>
<dbReference type="GeneCards" id="ATG16L2"/>
<dbReference type="HGNC" id="HGNC:25464">
    <property type="gene designation" value="ATG16L2"/>
</dbReference>
<dbReference type="HPA" id="ENSG00000168010">
    <property type="expression patterns" value="Tissue enhanced (bone marrow, lymphoid tissue)"/>
</dbReference>
<dbReference type="MIM" id="618716">
    <property type="type" value="gene"/>
</dbReference>
<dbReference type="neXtProt" id="NX_Q8NAA4"/>
<dbReference type="OpenTargets" id="ENSG00000168010"/>
<dbReference type="PharmGKB" id="PA142672575"/>
<dbReference type="VEuPathDB" id="HostDB:ENSG00000168010"/>
<dbReference type="eggNOG" id="KOG0288">
    <property type="taxonomic scope" value="Eukaryota"/>
</dbReference>
<dbReference type="GeneTree" id="ENSGT00940000153936"/>
<dbReference type="InParanoid" id="Q8NAA4"/>
<dbReference type="OMA" id="PHCAAIN"/>
<dbReference type="OrthoDB" id="6262491at2759"/>
<dbReference type="PAN-GO" id="Q8NAA4">
    <property type="GO annotations" value="3 GO annotations based on evolutionary models"/>
</dbReference>
<dbReference type="PhylomeDB" id="Q8NAA4"/>
<dbReference type="TreeFam" id="TF315541"/>
<dbReference type="PathwayCommons" id="Q8NAA4"/>
<dbReference type="SignaLink" id="Q8NAA4"/>
<dbReference type="BioGRID-ORCS" id="89849">
    <property type="hits" value="9 hits in 1157 CRISPR screens"/>
</dbReference>
<dbReference type="ChiTaRS" id="ATG16L2">
    <property type="organism name" value="human"/>
</dbReference>
<dbReference type="GenomeRNAi" id="89849"/>
<dbReference type="Pharos" id="Q8NAA4">
    <property type="development level" value="Tbio"/>
</dbReference>
<dbReference type="PRO" id="PR:Q8NAA4"/>
<dbReference type="Proteomes" id="UP000005640">
    <property type="component" value="Chromosome 11"/>
</dbReference>
<dbReference type="RNAct" id="Q8NAA4">
    <property type="molecule type" value="protein"/>
</dbReference>
<dbReference type="Bgee" id="ENSG00000168010">
    <property type="expression patterns" value="Expressed in granulocyte and 145 other cell types or tissues"/>
</dbReference>
<dbReference type="ExpressionAtlas" id="Q8NAA4">
    <property type="expression patterns" value="baseline and differential"/>
</dbReference>
<dbReference type="GO" id="GO:0034274">
    <property type="term" value="C:Atg12-Atg5-Atg16 complex"/>
    <property type="evidence" value="ECO:0000353"/>
    <property type="project" value="ComplexPortal"/>
</dbReference>
<dbReference type="GO" id="GO:0005829">
    <property type="term" value="C:cytosol"/>
    <property type="evidence" value="ECO:0000250"/>
    <property type="project" value="UniProtKB"/>
</dbReference>
<dbReference type="GO" id="GO:0005654">
    <property type="term" value="C:nucleoplasm"/>
    <property type="evidence" value="ECO:0000314"/>
    <property type="project" value="HPA"/>
</dbReference>
<dbReference type="GO" id="GO:0034045">
    <property type="term" value="C:phagophore assembly site membrane"/>
    <property type="evidence" value="ECO:0000266"/>
    <property type="project" value="ComplexPortal"/>
</dbReference>
<dbReference type="GO" id="GO:0000045">
    <property type="term" value="P:autophagosome assembly"/>
    <property type="evidence" value="ECO:0000266"/>
    <property type="project" value="ComplexPortal"/>
</dbReference>
<dbReference type="GO" id="GO:0016236">
    <property type="term" value="P:macroautophagy"/>
    <property type="evidence" value="ECO:0000266"/>
    <property type="project" value="ComplexPortal"/>
</dbReference>
<dbReference type="GO" id="GO:0039689">
    <property type="term" value="P:negative stranded viral RNA replication"/>
    <property type="evidence" value="ECO:0007669"/>
    <property type="project" value="Ensembl"/>
</dbReference>
<dbReference type="GO" id="GO:0015031">
    <property type="term" value="P:protein transport"/>
    <property type="evidence" value="ECO:0007669"/>
    <property type="project" value="UniProtKB-KW"/>
</dbReference>
<dbReference type="CDD" id="cd22887">
    <property type="entry name" value="Atg16_CCD"/>
    <property type="match status" value="1"/>
</dbReference>
<dbReference type="CDD" id="cd00200">
    <property type="entry name" value="WD40"/>
    <property type="match status" value="1"/>
</dbReference>
<dbReference type="FunFam" id="2.130.10.10:FF:000199">
    <property type="entry name" value="autophagy-related protein 16-2 isoform X1"/>
    <property type="match status" value="1"/>
</dbReference>
<dbReference type="Gene3D" id="2.130.10.10">
    <property type="entry name" value="YVTN repeat-like/Quinoprotein amine dehydrogenase"/>
    <property type="match status" value="1"/>
</dbReference>
<dbReference type="InterPro" id="IPR045160">
    <property type="entry name" value="ATG16"/>
</dbReference>
<dbReference type="InterPro" id="IPR013923">
    <property type="entry name" value="Autophagy-rel_prot_16_dom"/>
</dbReference>
<dbReference type="InterPro" id="IPR020472">
    <property type="entry name" value="G-protein_beta_WD-40_rep"/>
</dbReference>
<dbReference type="InterPro" id="IPR015943">
    <property type="entry name" value="WD40/YVTN_repeat-like_dom_sf"/>
</dbReference>
<dbReference type="InterPro" id="IPR019775">
    <property type="entry name" value="WD40_repeat_CS"/>
</dbReference>
<dbReference type="InterPro" id="IPR036322">
    <property type="entry name" value="WD40_repeat_dom_sf"/>
</dbReference>
<dbReference type="InterPro" id="IPR001680">
    <property type="entry name" value="WD40_rpt"/>
</dbReference>
<dbReference type="PANTHER" id="PTHR19878">
    <property type="entry name" value="AUTOPHAGY PROTEIN 16-LIKE"/>
    <property type="match status" value="1"/>
</dbReference>
<dbReference type="PANTHER" id="PTHR19878:SF7">
    <property type="entry name" value="PROTEIN ATG16L2"/>
    <property type="match status" value="1"/>
</dbReference>
<dbReference type="Pfam" id="PF08614">
    <property type="entry name" value="ATG16"/>
    <property type="match status" value="1"/>
</dbReference>
<dbReference type="Pfam" id="PF00400">
    <property type="entry name" value="WD40"/>
    <property type="match status" value="6"/>
</dbReference>
<dbReference type="PRINTS" id="PR00320">
    <property type="entry name" value="GPROTEINBRPT"/>
</dbReference>
<dbReference type="SMART" id="SM00320">
    <property type="entry name" value="WD40"/>
    <property type="match status" value="7"/>
</dbReference>
<dbReference type="SUPFAM" id="SSF50978">
    <property type="entry name" value="WD40 repeat-like"/>
    <property type="match status" value="1"/>
</dbReference>
<dbReference type="PROSITE" id="PS00678">
    <property type="entry name" value="WD_REPEATS_1"/>
    <property type="match status" value="3"/>
</dbReference>
<dbReference type="PROSITE" id="PS50082">
    <property type="entry name" value="WD_REPEATS_2"/>
    <property type="match status" value="4"/>
</dbReference>
<dbReference type="PROSITE" id="PS50294">
    <property type="entry name" value="WD_REPEATS_REGION"/>
    <property type="match status" value="1"/>
</dbReference>
<keyword id="KW-0025">Alternative splicing</keyword>
<keyword id="KW-0175">Coiled coil</keyword>
<keyword id="KW-0963">Cytoplasm</keyword>
<keyword id="KW-0653">Protein transport</keyword>
<keyword id="KW-1267">Proteomics identification</keyword>
<keyword id="KW-1185">Reference proteome</keyword>
<keyword id="KW-0677">Repeat</keyword>
<keyword id="KW-0813">Transport</keyword>
<keyword id="KW-0853">WD repeat</keyword>